<protein>
    <recommendedName>
        <fullName evidence="1">Undecaprenyl-diphosphatase 4</fullName>
        <ecNumber evidence="1">3.6.1.27</ecNumber>
    </recommendedName>
    <alternativeName>
        <fullName evidence="1">Bacitracin resistance protein 4</fullName>
    </alternativeName>
    <alternativeName>
        <fullName evidence="1">Undecaprenyl pyrophosphate phosphatase 4</fullName>
    </alternativeName>
</protein>
<reference key="1">
    <citation type="journal article" date="2007" name="J. Bacteriol.">
        <title>The complete genome sequence of Bacillus thuringiensis Al Hakam.</title>
        <authorList>
            <person name="Challacombe J.F."/>
            <person name="Altherr M.R."/>
            <person name="Xie G."/>
            <person name="Bhotika S.S."/>
            <person name="Brown N."/>
            <person name="Bruce D."/>
            <person name="Campbell C.S."/>
            <person name="Campbell M.L."/>
            <person name="Chen J."/>
            <person name="Chertkov O."/>
            <person name="Cleland C."/>
            <person name="Dimitrijevic M."/>
            <person name="Doggett N.A."/>
            <person name="Fawcett J.J."/>
            <person name="Glavina T."/>
            <person name="Goodwin L.A."/>
            <person name="Green L.D."/>
            <person name="Han C.S."/>
            <person name="Hill K.K."/>
            <person name="Hitchcock P."/>
            <person name="Jackson P.J."/>
            <person name="Keim P."/>
            <person name="Kewalramani A.R."/>
            <person name="Longmire J."/>
            <person name="Lucas S."/>
            <person name="Malfatti S."/>
            <person name="Martinez D."/>
            <person name="McMurry K."/>
            <person name="Meincke L.J."/>
            <person name="Misra M."/>
            <person name="Moseman B.L."/>
            <person name="Mundt M."/>
            <person name="Munk A.C."/>
            <person name="Okinaka R.T."/>
            <person name="Parson-Quintana B."/>
            <person name="Reilly L.P."/>
            <person name="Richardson P."/>
            <person name="Robinson D.L."/>
            <person name="Saunders E."/>
            <person name="Tapia R."/>
            <person name="Tesmer J.G."/>
            <person name="Thayer N."/>
            <person name="Thompson L.S."/>
            <person name="Tice H."/>
            <person name="Ticknor L.O."/>
            <person name="Wills P.L."/>
            <person name="Gilna P."/>
            <person name="Brettin T.S."/>
        </authorList>
    </citation>
    <scope>NUCLEOTIDE SEQUENCE [LARGE SCALE GENOMIC DNA]</scope>
    <source>
        <strain>Al Hakam</strain>
    </source>
</reference>
<name>UPPP4_BACAH</name>
<evidence type="ECO:0000255" key="1">
    <source>
        <dbReference type="HAMAP-Rule" id="MF_01006"/>
    </source>
</evidence>
<accession>A0RET0</accession>
<proteinExistence type="inferred from homology"/>
<organism>
    <name type="scientific">Bacillus thuringiensis (strain Al Hakam)</name>
    <dbReference type="NCBI Taxonomy" id="412694"/>
    <lineage>
        <taxon>Bacteria</taxon>
        <taxon>Bacillati</taxon>
        <taxon>Bacillota</taxon>
        <taxon>Bacilli</taxon>
        <taxon>Bacillales</taxon>
        <taxon>Bacillaceae</taxon>
        <taxon>Bacillus</taxon>
        <taxon>Bacillus cereus group</taxon>
    </lineage>
</organism>
<dbReference type="EC" id="3.6.1.27" evidence="1"/>
<dbReference type="EMBL" id="CP000485">
    <property type="protein sequence ID" value="ABK85723.1"/>
    <property type="molecule type" value="Genomic_DNA"/>
</dbReference>
<dbReference type="RefSeq" id="WP_001104262.1">
    <property type="nucleotide sequence ID" value="NC_008600.1"/>
</dbReference>
<dbReference type="SMR" id="A0RET0"/>
<dbReference type="KEGG" id="btl:BALH_2434"/>
<dbReference type="HOGENOM" id="CLU_060296_1_0_9"/>
<dbReference type="GO" id="GO:0005886">
    <property type="term" value="C:plasma membrane"/>
    <property type="evidence" value="ECO:0007669"/>
    <property type="project" value="UniProtKB-SubCell"/>
</dbReference>
<dbReference type="GO" id="GO:0050380">
    <property type="term" value="F:undecaprenyl-diphosphatase activity"/>
    <property type="evidence" value="ECO:0007669"/>
    <property type="project" value="UniProtKB-UniRule"/>
</dbReference>
<dbReference type="GO" id="GO:0071555">
    <property type="term" value="P:cell wall organization"/>
    <property type="evidence" value="ECO:0007669"/>
    <property type="project" value="UniProtKB-KW"/>
</dbReference>
<dbReference type="GO" id="GO:0009252">
    <property type="term" value="P:peptidoglycan biosynthetic process"/>
    <property type="evidence" value="ECO:0007669"/>
    <property type="project" value="UniProtKB-KW"/>
</dbReference>
<dbReference type="GO" id="GO:0008360">
    <property type="term" value="P:regulation of cell shape"/>
    <property type="evidence" value="ECO:0007669"/>
    <property type="project" value="UniProtKB-KW"/>
</dbReference>
<dbReference type="GO" id="GO:0046677">
    <property type="term" value="P:response to antibiotic"/>
    <property type="evidence" value="ECO:0007669"/>
    <property type="project" value="UniProtKB-UniRule"/>
</dbReference>
<dbReference type="HAMAP" id="MF_01006">
    <property type="entry name" value="Undec_diphosphatase"/>
    <property type="match status" value="1"/>
</dbReference>
<dbReference type="InterPro" id="IPR003824">
    <property type="entry name" value="UppP"/>
</dbReference>
<dbReference type="PANTHER" id="PTHR30622">
    <property type="entry name" value="UNDECAPRENYL-DIPHOSPHATASE"/>
    <property type="match status" value="1"/>
</dbReference>
<dbReference type="PANTHER" id="PTHR30622:SF4">
    <property type="entry name" value="UNDECAPRENYL-DIPHOSPHATASE"/>
    <property type="match status" value="1"/>
</dbReference>
<dbReference type="Pfam" id="PF02673">
    <property type="entry name" value="BacA"/>
    <property type="match status" value="1"/>
</dbReference>
<comment type="function">
    <text evidence="1">Catalyzes the dephosphorylation of undecaprenyl diphosphate (UPP). Confers resistance to bacitracin.</text>
</comment>
<comment type="catalytic activity">
    <reaction evidence="1">
        <text>di-trans,octa-cis-undecaprenyl diphosphate + H2O = di-trans,octa-cis-undecaprenyl phosphate + phosphate + H(+)</text>
        <dbReference type="Rhea" id="RHEA:28094"/>
        <dbReference type="ChEBI" id="CHEBI:15377"/>
        <dbReference type="ChEBI" id="CHEBI:15378"/>
        <dbReference type="ChEBI" id="CHEBI:43474"/>
        <dbReference type="ChEBI" id="CHEBI:58405"/>
        <dbReference type="ChEBI" id="CHEBI:60392"/>
        <dbReference type="EC" id="3.6.1.27"/>
    </reaction>
</comment>
<comment type="subcellular location">
    <subcellularLocation>
        <location evidence="1">Cell membrane</location>
        <topology evidence="1">Multi-pass membrane protein</topology>
    </subcellularLocation>
</comment>
<comment type="miscellaneous">
    <text>Bacitracin is thought to be involved in the inhibition of peptidoglycan synthesis by sequestering undecaprenyl diphosphate, thereby reducing the pool of lipid carrier available.</text>
</comment>
<comment type="similarity">
    <text evidence="1">Belongs to the UppP family.</text>
</comment>
<keyword id="KW-0046">Antibiotic resistance</keyword>
<keyword id="KW-1003">Cell membrane</keyword>
<keyword id="KW-0133">Cell shape</keyword>
<keyword id="KW-0961">Cell wall biogenesis/degradation</keyword>
<keyword id="KW-0378">Hydrolase</keyword>
<keyword id="KW-0472">Membrane</keyword>
<keyword id="KW-0573">Peptidoglycan synthesis</keyword>
<keyword id="KW-0812">Transmembrane</keyword>
<keyword id="KW-1133">Transmembrane helix</keyword>
<feature type="chain" id="PRO_0000290687" description="Undecaprenyl-diphosphatase 4">
    <location>
        <begin position="1"/>
        <end position="259"/>
    </location>
</feature>
<feature type="transmembrane region" description="Helical" evidence="1">
    <location>
        <begin position="1"/>
        <end position="21"/>
    </location>
</feature>
<feature type="transmembrane region" description="Helical" evidence="1">
    <location>
        <begin position="39"/>
        <end position="59"/>
    </location>
</feature>
<feature type="transmembrane region" description="Helical" evidence="1">
    <location>
        <begin position="71"/>
        <end position="91"/>
    </location>
</feature>
<feature type="transmembrane region" description="Helical" evidence="1">
    <location>
        <begin position="99"/>
        <end position="119"/>
    </location>
</feature>
<feature type="transmembrane region" description="Helical" evidence="1">
    <location>
        <begin position="133"/>
        <end position="153"/>
    </location>
</feature>
<feature type="transmembrane region" description="Helical" evidence="1">
    <location>
        <begin position="173"/>
        <end position="193"/>
    </location>
</feature>
<feature type="transmembrane region" description="Helical" evidence="1">
    <location>
        <begin position="208"/>
        <end position="228"/>
    </location>
</feature>
<feature type="transmembrane region" description="Helical" evidence="1">
    <location>
        <begin position="239"/>
        <end position="259"/>
    </location>
</feature>
<gene>
    <name evidence="1" type="primary">uppP4</name>
    <name type="ordered locus">BALH_2434</name>
</gene>
<sequence length="259" mass="29214">MNWLEAFILGIIQGLTEFLPISSTGHLYLGRHLFQLDEAGLFLDTMLHIGTLLAVFIYYKKEFIYLIKNPFSKLMLLLIVGTIPAVVIGLLFKDFFEDISKTGITIGWEFLVTGFFLYMADKQKNGRKKMDDITYKDAFIIGSFQAAAIFPAISRSGMTIVAALWRKLDRETAAYFSFLLSTPAIVGAIILQFADVFQGKAESISNTSLIVGTLSAAFFGYIAVSWMIQYLKRHSLKVFAYYVWGLGIIIITLQYTHVF</sequence>